<name>PYRC_ECOSE</name>
<reference key="1">
    <citation type="journal article" date="2008" name="DNA Res.">
        <title>Complete genome sequence and comparative analysis of the wild-type commensal Escherichia coli strain SE11 isolated from a healthy adult.</title>
        <authorList>
            <person name="Oshima K."/>
            <person name="Toh H."/>
            <person name="Ogura Y."/>
            <person name="Sasamoto H."/>
            <person name="Morita H."/>
            <person name="Park S.-H."/>
            <person name="Ooka T."/>
            <person name="Iyoda S."/>
            <person name="Taylor T.D."/>
            <person name="Hayashi T."/>
            <person name="Itoh K."/>
            <person name="Hattori M."/>
        </authorList>
    </citation>
    <scope>NUCLEOTIDE SEQUENCE [LARGE SCALE GENOMIC DNA]</scope>
    <source>
        <strain>SE11</strain>
    </source>
</reference>
<gene>
    <name evidence="1" type="primary">pyrC</name>
    <name type="ordered locus">ECSE_1125</name>
</gene>
<feature type="chain" id="PRO_1000100043" description="Dihydroorotase">
    <location>
        <begin position="1"/>
        <end position="348"/>
    </location>
</feature>
<feature type="active site" evidence="1">
    <location>
        <position position="251"/>
    </location>
</feature>
<feature type="binding site" evidence="1">
    <location>
        <position position="17"/>
    </location>
    <ligand>
        <name>Zn(2+)</name>
        <dbReference type="ChEBI" id="CHEBI:29105"/>
        <label>1</label>
    </ligand>
</feature>
<feature type="binding site" evidence="1">
    <location>
        <begin position="19"/>
        <end position="21"/>
    </location>
    <ligand>
        <name>substrate</name>
    </ligand>
</feature>
<feature type="binding site" evidence="1">
    <location>
        <position position="19"/>
    </location>
    <ligand>
        <name>Zn(2+)</name>
        <dbReference type="ChEBI" id="CHEBI:29105"/>
        <label>1</label>
    </ligand>
</feature>
<feature type="binding site" evidence="1">
    <location>
        <position position="45"/>
    </location>
    <ligand>
        <name>substrate</name>
    </ligand>
</feature>
<feature type="binding site" description="via carbamate group" evidence="1">
    <location>
        <position position="103"/>
    </location>
    <ligand>
        <name>Zn(2+)</name>
        <dbReference type="ChEBI" id="CHEBI:29105"/>
        <label>1</label>
    </ligand>
</feature>
<feature type="binding site" description="via carbamate group" evidence="1">
    <location>
        <position position="103"/>
    </location>
    <ligand>
        <name>Zn(2+)</name>
        <dbReference type="ChEBI" id="CHEBI:29105"/>
        <label>2</label>
    </ligand>
</feature>
<feature type="binding site" evidence="1">
    <location>
        <position position="140"/>
    </location>
    <ligand>
        <name>substrate</name>
    </ligand>
</feature>
<feature type="binding site" evidence="1">
    <location>
        <position position="140"/>
    </location>
    <ligand>
        <name>Zn(2+)</name>
        <dbReference type="ChEBI" id="CHEBI:29105"/>
        <label>2</label>
    </ligand>
</feature>
<feature type="binding site" evidence="1">
    <location>
        <position position="178"/>
    </location>
    <ligand>
        <name>Zn(2+)</name>
        <dbReference type="ChEBI" id="CHEBI:29105"/>
        <label>2</label>
    </ligand>
</feature>
<feature type="binding site" evidence="1">
    <location>
        <position position="223"/>
    </location>
    <ligand>
        <name>substrate</name>
    </ligand>
</feature>
<feature type="binding site" evidence="1">
    <location>
        <position position="251"/>
    </location>
    <ligand>
        <name>Zn(2+)</name>
        <dbReference type="ChEBI" id="CHEBI:29105"/>
        <label>1</label>
    </ligand>
</feature>
<feature type="binding site" evidence="1">
    <location>
        <position position="255"/>
    </location>
    <ligand>
        <name>substrate</name>
    </ligand>
</feature>
<feature type="binding site" evidence="1">
    <location>
        <position position="267"/>
    </location>
    <ligand>
        <name>substrate</name>
    </ligand>
</feature>
<feature type="modified residue" description="N6-carboxylysine" evidence="1">
    <location>
        <position position="103"/>
    </location>
</feature>
<dbReference type="EC" id="3.5.2.3" evidence="1"/>
<dbReference type="EMBL" id="AP009240">
    <property type="protein sequence ID" value="BAG76649.1"/>
    <property type="molecule type" value="Genomic_DNA"/>
</dbReference>
<dbReference type="RefSeq" id="WP_000126556.1">
    <property type="nucleotide sequence ID" value="NC_011415.1"/>
</dbReference>
<dbReference type="SMR" id="B6I9D9"/>
<dbReference type="MEROPS" id="M38.A02"/>
<dbReference type="KEGG" id="ecy:ECSE_1125"/>
<dbReference type="HOGENOM" id="CLU_041558_1_0_6"/>
<dbReference type="UniPathway" id="UPA00070">
    <property type="reaction ID" value="UER00117"/>
</dbReference>
<dbReference type="Proteomes" id="UP000008199">
    <property type="component" value="Chromosome"/>
</dbReference>
<dbReference type="GO" id="GO:0005829">
    <property type="term" value="C:cytosol"/>
    <property type="evidence" value="ECO:0007669"/>
    <property type="project" value="TreeGrafter"/>
</dbReference>
<dbReference type="GO" id="GO:0004151">
    <property type="term" value="F:dihydroorotase activity"/>
    <property type="evidence" value="ECO:0007669"/>
    <property type="project" value="UniProtKB-UniRule"/>
</dbReference>
<dbReference type="GO" id="GO:0008270">
    <property type="term" value="F:zinc ion binding"/>
    <property type="evidence" value="ECO:0007669"/>
    <property type="project" value="UniProtKB-UniRule"/>
</dbReference>
<dbReference type="GO" id="GO:0006207">
    <property type="term" value="P:'de novo' pyrimidine nucleobase biosynthetic process"/>
    <property type="evidence" value="ECO:0007669"/>
    <property type="project" value="TreeGrafter"/>
</dbReference>
<dbReference type="GO" id="GO:0044205">
    <property type="term" value="P:'de novo' UMP biosynthetic process"/>
    <property type="evidence" value="ECO:0007669"/>
    <property type="project" value="UniProtKB-UniRule"/>
</dbReference>
<dbReference type="CDD" id="cd01294">
    <property type="entry name" value="DHOase"/>
    <property type="match status" value="1"/>
</dbReference>
<dbReference type="FunFam" id="3.20.20.140:FF:000006">
    <property type="entry name" value="Dihydroorotase"/>
    <property type="match status" value="1"/>
</dbReference>
<dbReference type="Gene3D" id="3.20.20.140">
    <property type="entry name" value="Metal-dependent hydrolases"/>
    <property type="match status" value="1"/>
</dbReference>
<dbReference type="HAMAP" id="MF_00219">
    <property type="entry name" value="PyrC_classII"/>
    <property type="match status" value="1"/>
</dbReference>
<dbReference type="InterPro" id="IPR006680">
    <property type="entry name" value="Amidohydro-rel"/>
</dbReference>
<dbReference type="InterPro" id="IPR004721">
    <property type="entry name" value="DHOdimr"/>
</dbReference>
<dbReference type="InterPro" id="IPR002195">
    <property type="entry name" value="Dihydroorotase_CS"/>
</dbReference>
<dbReference type="InterPro" id="IPR032466">
    <property type="entry name" value="Metal_Hydrolase"/>
</dbReference>
<dbReference type="NCBIfam" id="TIGR00856">
    <property type="entry name" value="pyrC_dimer"/>
    <property type="match status" value="1"/>
</dbReference>
<dbReference type="PANTHER" id="PTHR43137">
    <property type="entry name" value="DIHYDROOROTASE"/>
    <property type="match status" value="1"/>
</dbReference>
<dbReference type="PANTHER" id="PTHR43137:SF1">
    <property type="entry name" value="DIHYDROOROTASE"/>
    <property type="match status" value="1"/>
</dbReference>
<dbReference type="Pfam" id="PF01979">
    <property type="entry name" value="Amidohydro_1"/>
    <property type="match status" value="1"/>
</dbReference>
<dbReference type="PIRSF" id="PIRSF001237">
    <property type="entry name" value="DHOdimr"/>
    <property type="match status" value="1"/>
</dbReference>
<dbReference type="SUPFAM" id="SSF51556">
    <property type="entry name" value="Metallo-dependent hydrolases"/>
    <property type="match status" value="1"/>
</dbReference>
<dbReference type="PROSITE" id="PS00482">
    <property type="entry name" value="DIHYDROOROTASE_1"/>
    <property type="match status" value="1"/>
</dbReference>
<dbReference type="PROSITE" id="PS00483">
    <property type="entry name" value="DIHYDROOROTASE_2"/>
    <property type="match status" value="1"/>
</dbReference>
<proteinExistence type="inferred from homology"/>
<accession>B6I9D9</accession>
<evidence type="ECO:0000255" key="1">
    <source>
        <dbReference type="HAMAP-Rule" id="MF_00219"/>
    </source>
</evidence>
<comment type="function">
    <text evidence="1">Catalyzes the reversible cyclization of carbamoyl aspartate to dihydroorotate.</text>
</comment>
<comment type="catalytic activity">
    <reaction evidence="1">
        <text>(S)-dihydroorotate + H2O = N-carbamoyl-L-aspartate + H(+)</text>
        <dbReference type="Rhea" id="RHEA:24296"/>
        <dbReference type="ChEBI" id="CHEBI:15377"/>
        <dbReference type="ChEBI" id="CHEBI:15378"/>
        <dbReference type="ChEBI" id="CHEBI:30864"/>
        <dbReference type="ChEBI" id="CHEBI:32814"/>
        <dbReference type="EC" id="3.5.2.3"/>
    </reaction>
</comment>
<comment type="cofactor">
    <cofactor evidence="1">
        <name>Zn(2+)</name>
        <dbReference type="ChEBI" id="CHEBI:29105"/>
    </cofactor>
    <text evidence="1">Binds 2 Zn(2+) ions per subunit.</text>
</comment>
<comment type="pathway">
    <text evidence="1">Pyrimidine metabolism; UMP biosynthesis via de novo pathway; (S)-dihydroorotate from bicarbonate: step 3/3.</text>
</comment>
<comment type="subunit">
    <text evidence="1">Homodimer.</text>
</comment>
<comment type="similarity">
    <text evidence="1">Belongs to the metallo-dependent hydrolases superfamily. DHOase family. Class II DHOase subfamily.</text>
</comment>
<sequence length="348" mass="38826">MTAPSQVLKIRRPDDWHLHLRDGDMLKTVVPYTSEIYGRAIVMPNLAPPVTTVEAAVAYRQRILDAVPAGHNFTPLMTCYLTDSLDPNELERGFNEGVFTAAKLYPANATTNSSHGVTSIDAIMPVLERMEKIGMPLLVHGEVTHADIDIFDREARFIESVMEPLRQRLTALKVVFEHITTKDAADYVRDGNERLAATITPQHLMFNRNHMLVGGVRPHLYCLPILKRNIHQQALRELVASGFNRVFLGTDSAPHARHRKESSCGCAGCFNAPTALGSYATVFEEMNALQHFEAFCSVNGPQFYGLPVNDTFIELVREEQQVAESIALTDDTLVPFLAGETVRWSVKQ</sequence>
<protein>
    <recommendedName>
        <fullName evidence="1">Dihydroorotase</fullName>
        <shortName evidence="1">DHOase</shortName>
        <ecNumber evidence="1">3.5.2.3</ecNumber>
    </recommendedName>
</protein>
<keyword id="KW-0378">Hydrolase</keyword>
<keyword id="KW-0479">Metal-binding</keyword>
<keyword id="KW-0665">Pyrimidine biosynthesis</keyword>
<keyword id="KW-0862">Zinc</keyword>
<organism>
    <name type="scientific">Escherichia coli (strain SE11)</name>
    <dbReference type="NCBI Taxonomy" id="409438"/>
    <lineage>
        <taxon>Bacteria</taxon>
        <taxon>Pseudomonadati</taxon>
        <taxon>Pseudomonadota</taxon>
        <taxon>Gammaproteobacteria</taxon>
        <taxon>Enterobacterales</taxon>
        <taxon>Enterobacteriaceae</taxon>
        <taxon>Escherichia</taxon>
    </lineage>
</organism>